<organism>
    <name type="scientific">Odontoglossum ringspot virus (isolate Singapore 1)</name>
    <name type="common">ORSV</name>
    <dbReference type="NCBI Taxonomy" id="138662"/>
    <lineage>
        <taxon>Viruses</taxon>
        <taxon>Riboviria</taxon>
        <taxon>Orthornavirae</taxon>
        <taxon>Kitrinoviricota</taxon>
        <taxon>Alsuviricetes</taxon>
        <taxon>Martellivirales</taxon>
        <taxon>Virgaviridae</taxon>
        <taxon>Tobamovirus</taxon>
        <taxon>Odontoglossum ringspot virus</taxon>
    </lineage>
</organism>
<sequence>MSYTITDPSKLAYLSSAWADPNSLINLCTNSLGNQFQTQQARTTVQQQFADVWQPVPTLTSRFPAGAGYFRVYRYDPILDPLITFLMGTFDTRNRIIEVENPQNPTTTETLDATRRVDDATVAIRSAINNLLNELVRGTGMYNQVSFETMSGLTWTSS</sequence>
<keyword id="KW-0007">Acetylation</keyword>
<keyword id="KW-0167">Capsid protein</keyword>
<keyword id="KW-1139">Helical capsid protein</keyword>
<keyword id="KW-0946">Virion</keyword>
<evidence type="ECO:0000250" key="1"/>
<evidence type="ECO:0000305" key="2"/>
<gene>
    <name type="primary">CP</name>
</gene>
<feature type="initiator methionine" description="Removed; by host" evidence="1">
    <location>
        <position position="1"/>
    </location>
</feature>
<feature type="chain" id="PRO_0000144933" description="Capsid protein">
    <location>
        <begin position="2"/>
        <end position="158"/>
    </location>
</feature>
<feature type="modified residue" description="N-acetylserine; by host" evidence="1">
    <location>
        <position position="2"/>
    </location>
</feature>
<dbReference type="EMBL" id="U34586">
    <property type="protein sequence ID" value="AAC55015.1"/>
    <property type="molecule type" value="Genomic_RNA"/>
</dbReference>
<dbReference type="SMR" id="Q84136"/>
<dbReference type="Proteomes" id="UP000008384">
    <property type="component" value="Genome"/>
</dbReference>
<dbReference type="GO" id="GO:0019029">
    <property type="term" value="C:helical viral capsid"/>
    <property type="evidence" value="ECO:0007669"/>
    <property type="project" value="UniProtKB-KW"/>
</dbReference>
<dbReference type="GO" id="GO:0005198">
    <property type="term" value="F:structural molecule activity"/>
    <property type="evidence" value="ECO:0007669"/>
    <property type="project" value="InterPro"/>
</dbReference>
<dbReference type="Gene3D" id="1.20.120.70">
    <property type="entry name" value="Tobacco mosaic virus-like, coat protein"/>
    <property type="match status" value="1"/>
</dbReference>
<dbReference type="InterPro" id="IPR001337">
    <property type="entry name" value="TMV-like_coat"/>
</dbReference>
<dbReference type="InterPro" id="IPR036417">
    <property type="entry name" value="TMV-like_coat_sf"/>
</dbReference>
<dbReference type="Pfam" id="PF00721">
    <property type="entry name" value="TMV_coat"/>
    <property type="match status" value="1"/>
</dbReference>
<dbReference type="SUPFAM" id="SSF47195">
    <property type="entry name" value="TMV-like viral coat proteins"/>
    <property type="match status" value="1"/>
</dbReference>
<organismHost>
    <name type="scientific">Cymbidium</name>
    <dbReference type="NCBI Taxonomy" id="14366"/>
</organismHost>
<organismHost>
    <name type="scientific">Odontoglossum</name>
    <dbReference type="NCBI Taxonomy" id="154697"/>
</organismHost>
<name>CAPSD_ORSVS</name>
<accession>Q84136</accession>
<comment type="function">
    <text>Capsid protein self-assembles to form rod-shaped virions about 18 nm in diameter with a central canal enclosing the viral genomic RNA.</text>
</comment>
<comment type="subcellular location">
    <subcellularLocation>
        <location evidence="2">Virion</location>
    </subcellularLocation>
</comment>
<comment type="similarity">
    <text evidence="2">Belongs to the virgaviridae capsid protein family.</text>
</comment>
<proteinExistence type="inferred from homology"/>
<protein>
    <recommendedName>
        <fullName>Capsid protein</fullName>
    </recommendedName>
    <alternativeName>
        <fullName>Coat protein</fullName>
    </alternativeName>
</protein>
<reference key="1">
    <citation type="journal article" date="1996" name="Gene">
        <title>The complete sequence of a Singapore isolate of odontoglossum ringspot virus and comparison with other tobamoviruses.</title>
        <authorList>
            <person name="Chng C.G."/>
            <person name="Wong S.M."/>
            <person name="Mahtani P.H."/>
            <person name="Loh C.S."/>
            <person name="Goh C.J."/>
            <person name="Kao M.C.C."/>
            <person name="Chung M.C.M."/>
            <person name="Watanabe Y."/>
        </authorList>
    </citation>
    <scope>NUCLEOTIDE SEQUENCE [GENOMIC RNA]</scope>
</reference>